<keyword id="KW-0963">Cytoplasm</keyword>
<keyword id="KW-0324">Glycolysis</keyword>
<keyword id="KW-0418">Kinase</keyword>
<keyword id="KW-0460">Magnesium</keyword>
<keyword id="KW-0479">Metal-binding</keyword>
<keyword id="KW-0808">Transferase</keyword>
<sequence length="410" mass="44201">MVKTVALLTAGGLAPCLSSAVGGLIERYTEMSPETNIILYLNGYKGLLLGEKVLVTPAMRLQAHVLHTVGGSCIGNSRVKMANVADCVKRGLVKEGQDPRQVAADQLIKDGVDVLHTIGGDDTNTAAADLAAYLKAHGYTLRVIGLPKTIDNDIVPVRQSLGAMTAAEQASRFFQNVVAEQTANPRVLLVHEVMGRSCGYLTAQAADYYRAQLAHREFAPELGHTRERYDIHAVYVPEMTIDLKAEAARLRAVMERVGCVNIFLSEGAGINDIVAEMTAKGETVPRDPFGHVKIDLINPGAWFGKQFGGMVGADKVLVQKSGYFSRSAPANAEDLRLIKGMVDLAVDCALRGEAGLIGHDEERNGVLRAIEFERVKGAKAFNIDHPWFTHLLNEIGQPKGAKVSVAHGDE</sequence>
<organism>
    <name type="scientific">Mastigamoeba balamuthi</name>
    <name type="common">Phreatamoeba balamuthi</name>
    <dbReference type="NCBI Taxonomy" id="108607"/>
    <lineage>
        <taxon>Eukaryota</taxon>
        <taxon>Amoebozoa</taxon>
        <taxon>Evosea</taxon>
        <taxon>Archamoebae</taxon>
        <taxon>Mastigamoebida</taxon>
        <taxon>Mastigamoebidae</taxon>
        <taxon>Mastigamoeba</taxon>
    </lineage>
</organism>
<comment type="function">
    <text evidence="1">Catalyzes the phosphorylation of D-fructose 6-phosphate, the first committing step of glycolysis. Uses inorganic phosphate (PPi) as phosphoryl donor instead of ATP like common ATP-dependent phosphofructokinases (ATP-PFKs), which renders the reaction reversible, and can thus function both in glycolysis and gluconeogenesis. Consistently, PPi-PFK can replace the enzymes of both the forward (ATP-PFK) and reverse (fructose-bisphosphatase (FBPase)) reactions.</text>
</comment>
<comment type="catalytic activity">
    <reaction evidence="1">
        <text>beta-D-fructose 6-phosphate + diphosphate = beta-D-fructose 1,6-bisphosphate + phosphate + H(+)</text>
        <dbReference type="Rhea" id="RHEA:13613"/>
        <dbReference type="ChEBI" id="CHEBI:15378"/>
        <dbReference type="ChEBI" id="CHEBI:32966"/>
        <dbReference type="ChEBI" id="CHEBI:33019"/>
        <dbReference type="ChEBI" id="CHEBI:43474"/>
        <dbReference type="ChEBI" id="CHEBI:57634"/>
        <dbReference type="EC" id="2.7.1.90"/>
    </reaction>
</comment>
<comment type="cofactor">
    <cofactor evidence="1">
        <name>Mg(2+)</name>
        <dbReference type="ChEBI" id="CHEBI:18420"/>
    </cofactor>
</comment>
<comment type="activity regulation">
    <text evidence="1">Non-allosteric.</text>
</comment>
<comment type="pathway">
    <text evidence="1">Carbohydrate degradation; glycolysis; D-glyceraldehyde 3-phosphate and glycerone phosphate from D-glucose: step 3/4.</text>
</comment>
<comment type="subunit">
    <text evidence="1">Homodimer or homotetramer.</text>
</comment>
<comment type="subcellular location">
    <subcellularLocation>
        <location evidence="1">Cytoplasm</location>
    </subcellularLocation>
</comment>
<comment type="similarity">
    <text evidence="1">Belongs to the phosphofructokinase type A (PFKA) family. PPi-dependent PFK group II subfamily. Clade 'P' sub-subfamily.</text>
</comment>
<name>PFP_MASBA</name>
<dbReference type="EC" id="2.7.1.90" evidence="1"/>
<dbReference type="EMBL" id="AF246209">
    <property type="protein sequence ID" value="AAF70463.1"/>
    <property type="molecule type" value="mRNA"/>
</dbReference>
<dbReference type="SMR" id="Q9NGP6"/>
<dbReference type="VEuPathDB" id="AmoebaDB:MBAL_010012"/>
<dbReference type="UniPathway" id="UPA00109">
    <property type="reaction ID" value="UER00182"/>
</dbReference>
<dbReference type="GO" id="GO:0005737">
    <property type="term" value="C:cytoplasm"/>
    <property type="evidence" value="ECO:0007669"/>
    <property type="project" value="UniProtKB-SubCell"/>
</dbReference>
<dbReference type="GO" id="GO:0003872">
    <property type="term" value="F:6-phosphofructokinase activity"/>
    <property type="evidence" value="ECO:0007669"/>
    <property type="project" value="UniProtKB-UniRule"/>
</dbReference>
<dbReference type="GO" id="GO:0047334">
    <property type="term" value="F:diphosphate-fructose-6-phosphate 1-phosphotransferase activity"/>
    <property type="evidence" value="ECO:0007669"/>
    <property type="project" value="UniProtKB-EC"/>
</dbReference>
<dbReference type="GO" id="GO:0046872">
    <property type="term" value="F:metal ion binding"/>
    <property type="evidence" value="ECO:0007669"/>
    <property type="project" value="UniProtKB-KW"/>
</dbReference>
<dbReference type="GO" id="GO:0006002">
    <property type="term" value="P:fructose 6-phosphate metabolic process"/>
    <property type="evidence" value="ECO:0007669"/>
    <property type="project" value="InterPro"/>
</dbReference>
<dbReference type="Gene3D" id="3.40.50.450">
    <property type="match status" value="1"/>
</dbReference>
<dbReference type="HAMAP" id="MF_01977">
    <property type="entry name" value="Phosphofructokinase_II_P"/>
    <property type="match status" value="1"/>
</dbReference>
<dbReference type="InterPro" id="IPR022953">
    <property type="entry name" value="ATP_PFK"/>
</dbReference>
<dbReference type="InterPro" id="IPR050929">
    <property type="entry name" value="PFKA"/>
</dbReference>
<dbReference type="InterPro" id="IPR000023">
    <property type="entry name" value="Phosphofructokinase_dom"/>
</dbReference>
<dbReference type="InterPro" id="IPR035966">
    <property type="entry name" value="PKF_sf"/>
</dbReference>
<dbReference type="InterPro" id="IPR011405">
    <property type="entry name" value="PPi-PFK_SMc01852"/>
</dbReference>
<dbReference type="NCBIfam" id="NF005121">
    <property type="entry name" value="PRK06555.1"/>
    <property type="match status" value="1"/>
</dbReference>
<dbReference type="PANTHER" id="PTHR45770">
    <property type="entry name" value="ATP-DEPENDENT 6-PHOSPHOFRUCTOKINASE 1"/>
    <property type="match status" value="1"/>
</dbReference>
<dbReference type="Pfam" id="PF00365">
    <property type="entry name" value="PFK"/>
    <property type="match status" value="1"/>
</dbReference>
<dbReference type="PIRSF" id="PIRSF036484">
    <property type="entry name" value="PPi-PFK_SMc01852"/>
    <property type="match status" value="1"/>
</dbReference>
<dbReference type="PRINTS" id="PR00476">
    <property type="entry name" value="PHFRCTKINASE"/>
</dbReference>
<dbReference type="SUPFAM" id="SSF53784">
    <property type="entry name" value="Phosphofructokinase"/>
    <property type="match status" value="1"/>
</dbReference>
<protein>
    <recommendedName>
        <fullName evidence="1">Pyrophosphate--fructose 6-phosphate 1-phosphotransferase</fullName>
        <ecNumber evidence="1">2.7.1.90</ecNumber>
    </recommendedName>
    <alternativeName>
        <fullName evidence="1">6-phosphofructokinase, pyrophosphate dependent</fullName>
    </alternativeName>
    <alternativeName>
        <fullName evidence="1">PPi-dependent phosphofructokinase</fullName>
        <shortName evidence="1">PPi-PFK</shortName>
    </alternativeName>
    <alternativeName>
        <fullName evidence="1">Pyrophosphate-dependent 6-phosphofructose-1-kinase</fullName>
    </alternativeName>
</protein>
<evidence type="ECO:0000255" key="1">
    <source>
        <dbReference type="HAMAP-Rule" id="MF_01977"/>
    </source>
</evidence>
<reference key="1">
    <citation type="journal article" date="2001" name="J. Bacteriol.">
        <title>Presence of prokaryotic and eukaryotic species in all subgroups of the PP(i)-dependent group II phosphofructokinase protein family.</title>
        <authorList>
            <person name="Muller M."/>
            <person name="Lee J.A."/>
            <person name="Gordon P."/>
            <person name="Gaasterland T."/>
            <person name="Sensen C.W."/>
        </authorList>
    </citation>
    <scope>NUCLEOTIDE SEQUENCE [MRNA]</scope>
</reference>
<proteinExistence type="evidence at transcript level"/>
<feature type="chain" id="PRO_0000429705" description="Pyrophosphate--fructose 6-phosphate 1-phosphotransferase">
    <location>
        <begin position="1"/>
        <end position="410"/>
    </location>
</feature>
<feature type="active site" description="Proton acceptor" evidence="1">
    <location>
        <position position="151"/>
    </location>
</feature>
<feature type="binding site" evidence="1">
    <location>
        <position position="12"/>
    </location>
    <ligand>
        <name>diphosphate</name>
        <dbReference type="ChEBI" id="CHEBI:33019"/>
    </ligand>
</feature>
<feature type="binding site" evidence="1">
    <location>
        <position position="121"/>
    </location>
    <ligand>
        <name>Mg(2+)</name>
        <dbReference type="ChEBI" id="CHEBI:18420"/>
        <note>catalytic</note>
    </ligand>
</feature>
<feature type="binding site" evidence="1">
    <location>
        <begin position="149"/>
        <end position="151"/>
    </location>
    <ligand>
        <name>substrate</name>
    </ligand>
</feature>
<feature type="binding site" evidence="1">
    <location>
        <begin position="194"/>
        <end position="196"/>
    </location>
    <ligand>
        <name>substrate</name>
    </ligand>
</feature>
<feature type="binding site" evidence="1">
    <location>
        <position position="266"/>
    </location>
    <ligand>
        <name>substrate</name>
    </ligand>
</feature>
<feature type="binding site" evidence="1">
    <location>
        <begin position="323"/>
        <end position="326"/>
    </location>
    <ligand>
        <name>substrate</name>
    </ligand>
</feature>
<feature type="site" description="Important for catalytic activity and substrate specificity; stabilizes the transition state when the phosphoryl donor is PPi; prevents ATP from binding by mimicking the alpha-phosphate group of ATP" evidence="1">
    <location>
        <position position="122"/>
    </location>
</feature>
<feature type="site" description="Important for catalytic activity; stabilizes the transition state when the phosphoryl donor is PPi" evidence="1">
    <location>
        <position position="148"/>
    </location>
</feature>
<accession>Q9NGP6</accession>